<sequence length="420" mass="45265">MPEGNGTVALAFSGGLDTTVCVSLLKEEYGYDEVIGVTVDVGQPDYEFEEAEETAEALGVEQHVVDATEEFADLCMEAVKANADYQGYPLGTALARPVIAKAILSVAEDEGCSAVAHGCTGKGNDQLRFESVWRDSDLDVIAPVRELGLTREWENEYAAEKGLPVEGGDGGRYSIDTNLWSRSIEGSELEDPSTIPADDIYKWTDNPSDKDAELVEVEFEDGVPVAVDGEELGGVELIEQLNKQAGAHGIGRTDMMEDRMLGLKVRENYEHPAATVLLTAHEALEGLVLTQEERQFKAQVDQEWSQKAYQGLVDAPLTGALEAFIDDTNERVTGTVTVKLEGGHCRPVSRESDYAVYSESAASFNEEDVSGGITQQDATGVAKYHGFQSRLANKILDDAKKGAAVTDGSGDHAASEDTEE</sequence>
<accession>Q5UZ46</accession>
<protein>
    <recommendedName>
        <fullName evidence="1">Argininosuccinate synthase</fullName>
        <ecNumber evidence="1">6.3.4.5</ecNumber>
    </recommendedName>
    <alternativeName>
        <fullName evidence="1">Citrulline--aspartate ligase</fullName>
    </alternativeName>
</protein>
<feature type="chain" id="PRO_0000148672" description="Argininosuccinate synthase">
    <location>
        <begin position="1"/>
        <end position="420"/>
    </location>
</feature>
<feature type="region of interest" description="Disordered" evidence="2">
    <location>
        <begin position="401"/>
        <end position="420"/>
    </location>
</feature>
<feature type="compositionally biased region" description="Basic and acidic residues" evidence="2">
    <location>
        <begin position="409"/>
        <end position="420"/>
    </location>
</feature>
<feature type="binding site" evidence="1">
    <location>
        <begin position="11"/>
        <end position="19"/>
    </location>
    <ligand>
        <name>ATP</name>
        <dbReference type="ChEBI" id="CHEBI:30616"/>
    </ligand>
</feature>
<feature type="binding site" evidence="1">
    <location>
        <position position="88"/>
    </location>
    <ligand>
        <name>L-citrulline</name>
        <dbReference type="ChEBI" id="CHEBI:57743"/>
    </ligand>
</feature>
<feature type="binding site" evidence="1">
    <location>
        <position position="118"/>
    </location>
    <ligand>
        <name>ATP</name>
        <dbReference type="ChEBI" id="CHEBI:30616"/>
    </ligand>
</feature>
<feature type="binding site" evidence="1">
    <location>
        <position position="120"/>
    </location>
    <ligand>
        <name>L-aspartate</name>
        <dbReference type="ChEBI" id="CHEBI:29991"/>
    </ligand>
</feature>
<feature type="binding site" evidence="1">
    <location>
        <position position="124"/>
    </location>
    <ligand>
        <name>L-aspartate</name>
        <dbReference type="ChEBI" id="CHEBI:29991"/>
    </ligand>
</feature>
<feature type="binding site" evidence="1">
    <location>
        <position position="124"/>
    </location>
    <ligand>
        <name>L-citrulline</name>
        <dbReference type="ChEBI" id="CHEBI:57743"/>
    </ligand>
</feature>
<feature type="binding site" evidence="1">
    <location>
        <position position="125"/>
    </location>
    <ligand>
        <name>L-aspartate</name>
        <dbReference type="ChEBI" id="CHEBI:29991"/>
    </ligand>
</feature>
<feature type="binding site" evidence="1">
    <location>
        <position position="128"/>
    </location>
    <ligand>
        <name>L-citrulline</name>
        <dbReference type="ChEBI" id="CHEBI:57743"/>
    </ligand>
</feature>
<feature type="binding site" evidence="1">
    <location>
        <position position="174"/>
    </location>
    <ligand>
        <name>L-citrulline</name>
        <dbReference type="ChEBI" id="CHEBI:57743"/>
    </ligand>
</feature>
<feature type="binding site" evidence="1">
    <location>
        <position position="183"/>
    </location>
    <ligand>
        <name>L-citrulline</name>
        <dbReference type="ChEBI" id="CHEBI:57743"/>
    </ligand>
</feature>
<feature type="binding site" evidence="1">
    <location>
        <position position="257"/>
    </location>
    <ligand>
        <name>L-citrulline</name>
        <dbReference type="ChEBI" id="CHEBI:57743"/>
    </ligand>
</feature>
<feature type="binding site" evidence="1">
    <location>
        <position position="269"/>
    </location>
    <ligand>
        <name>L-citrulline</name>
        <dbReference type="ChEBI" id="CHEBI:57743"/>
    </ligand>
</feature>
<comment type="catalytic activity">
    <reaction evidence="1">
        <text>L-citrulline + L-aspartate + ATP = 2-(N(omega)-L-arginino)succinate + AMP + diphosphate + H(+)</text>
        <dbReference type="Rhea" id="RHEA:10932"/>
        <dbReference type="ChEBI" id="CHEBI:15378"/>
        <dbReference type="ChEBI" id="CHEBI:29991"/>
        <dbReference type="ChEBI" id="CHEBI:30616"/>
        <dbReference type="ChEBI" id="CHEBI:33019"/>
        <dbReference type="ChEBI" id="CHEBI:57472"/>
        <dbReference type="ChEBI" id="CHEBI:57743"/>
        <dbReference type="ChEBI" id="CHEBI:456215"/>
        <dbReference type="EC" id="6.3.4.5"/>
    </reaction>
</comment>
<comment type="pathway">
    <text evidence="1">Amino-acid biosynthesis; L-arginine biosynthesis; L-arginine from L-ornithine and carbamoyl phosphate: step 2/3.</text>
</comment>
<comment type="subunit">
    <text evidence="1">Homotetramer.</text>
</comment>
<comment type="subcellular location">
    <subcellularLocation>
        <location evidence="1">Cytoplasm</location>
    </subcellularLocation>
</comment>
<comment type="similarity">
    <text evidence="1">Belongs to the argininosuccinate synthase family. Type 1 subfamily.</text>
</comment>
<reference key="1">
    <citation type="journal article" date="2004" name="Genome Res.">
        <title>Genome sequence of Haloarcula marismortui: a halophilic archaeon from the Dead Sea.</title>
        <authorList>
            <person name="Baliga N.S."/>
            <person name="Bonneau R."/>
            <person name="Facciotti M.T."/>
            <person name="Pan M."/>
            <person name="Glusman G."/>
            <person name="Deutsch E.W."/>
            <person name="Shannon P."/>
            <person name="Chiu Y."/>
            <person name="Weng R.S."/>
            <person name="Gan R.R."/>
            <person name="Hung P."/>
            <person name="Date S.V."/>
            <person name="Marcotte E."/>
            <person name="Hood L."/>
            <person name="Ng W.V."/>
        </authorList>
    </citation>
    <scope>NUCLEOTIDE SEQUENCE [LARGE SCALE GENOMIC DNA]</scope>
    <source>
        <strain>ATCC 43049 / DSM 3752 / JCM 8966 / VKM B-1809</strain>
    </source>
</reference>
<proteinExistence type="inferred from homology"/>
<evidence type="ECO:0000255" key="1">
    <source>
        <dbReference type="HAMAP-Rule" id="MF_00005"/>
    </source>
</evidence>
<evidence type="ECO:0000256" key="2">
    <source>
        <dbReference type="SAM" id="MobiDB-lite"/>
    </source>
</evidence>
<name>ASSY_HALMA</name>
<gene>
    <name evidence="1" type="primary">argG</name>
    <name type="ordered locus">rrnAC2683</name>
</gene>
<keyword id="KW-0028">Amino-acid biosynthesis</keyword>
<keyword id="KW-0055">Arginine biosynthesis</keyword>
<keyword id="KW-0067">ATP-binding</keyword>
<keyword id="KW-0963">Cytoplasm</keyword>
<keyword id="KW-0436">Ligase</keyword>
<keyword id="KW-0547">Nucleotide-binding</keyword>
<keyword id="KW-1185">Reference proteome</keyword>
<dbReference type="EC" id="6.3.4.5" evidence="1"/>
<dbReference type="EMBL" id="AY596297">
    <property type="protein sequence ID" value="AAV47457.1"/>
    <property type="molecule type" value="Genomic_DNA"/>
</dbReference>
<dbReference type="RefSeq" id="WP_011224370.1">
    <property type="nucleotide sequence ID" value="NC_006396.1"/>
</dbReference>
<dbReference type="SMR" id="Q5UZ46"/>
<dbReference type="STRING" id="272569.rrnAC2683"/>
<dbReference type="PaxDb" id="272569-rrnAC2683"/>
<dbReference type="EnsemblBacteria" id="AAV47457">
    <property type="protein sequence ID" value="AAV47457"/>
    <property type="gene ID" value="rrnAC2683"/>
</dbReference>
<dbReference type="GeneID" id="40153553"/>
<dbReference type="KEGG" id="hma:rrnAC2683"/>
<dbReference type="PATRIC" id="fig|272569.17.peg.3272"/>
<dbReference type="eggNOG" id="arCOG00112">
    <property type="taxonomic scope" value="Archaea"/>
</dbReference>
<dbReference type="HOGENOM" id="CLU_032784_4_0_2"/>
<dbReference type="UniPathway" id="UPA00068">
    <property type="reaction ID" value="UER00113"/>
</dbReference>
<dbReference type="Proteomes" id="UP000001169">
    <property type="component" value="Chromosome I"/>
</dbReference>
<dbReference type="GO" id="GO:0005737">
    <property type="term" value="C:cytoplasm"/>
    <property type="evidence" value="ECO:0007669"/>
    <property type="project" value="UniProtKB-SubCell"/>
</dbReference>
<dbReference type="GO" id="GO:0004055">
    <property type="term" value="F:argininosuccinate synthase activity"/>
    <property type="evidence" value="ECO:0007669"/>
    <property type="project" value="UniProtKB-UniRule"/>
</dbReference>
<dbReference type="GO" id="GO:0005524">
    <property type="term" value="F:ATP binding"/>
    <property type="evidence" value="ECO:0007669"/>
    <property type="project" value="UniProtKB-UniRule"/>
</dbReference>
<dbReference type="GO" id="GO:0000053">
    <property type="term" value="P:argininosuccinate metabolic process"/>
    <property type="evidence" value="ECO:0007669"/>
    <property type="project" value="TreeGrafter"/>
</dbReference>
<dbReference type="GO" id="GO:0006526">
    <property type="term" value="P:L-arginine biosynthetic process"/>
    <property type="evidence" value="ECO:0007669"/>
    <property type="project" value="UniProtKB-UniRule"/>
</dbReference>
<dbReference type="GO" id="GO:0000050">
    <property type="term" value="P:urea cycle"/>
    <property type="evidence" value="ECO:0007669"/>
    <property type="project" value="TreeGrafter"/>
</dbReference>
<dbReference type="CDD" id="cd01999">
    <property type="entry name" value="ASS"/>
    <property type="match status" value="1"/>
</dbReference>
<dbReference type="FunFam" id="3.90.1260.10:FF:000007">
    <property type="entry name" value="Argininosuccinate synthase"/>
    <property type="match status" value="1"/>
</dbReference>
<dbReference type="Gene3D" id="3.90.1260.10">
    <property type="entry name" value="Argininosuccinate synthetase, chain A, domain 2"/>
    <property type="match status" value="1"/>
</dbReference>
<dbReference type="Gene3D" id="3.40.50.620">
    <property type="entry name" value="HUPs"/>
    <property type="match status" value="1"/>
</dbReference>
<dbReference type="HAMAP" id="MF_00005">
    <property type="entry name" value="Arg_succ_synth_type1"/>
    <property type="match status" value="1"/>
</dbReference>
<dbReference type="InterPro" id="IPR048268">
    <property type="entry name" value="Arginosuc_syn_C"/>
</dbReference>
<dbReference type="InterPro" id="IPR048267">
    <property type="entry name" value="Arginosuc_syn_N"/>
</dbReference>
<dbReference type="InterPro" id="IPR001518">
    <property type="entry name" value="Arginosuc_synth"/>
</dbReference>
<dbReference type="InterPro" id="IPR018223">
    <property type="entry name" value="Arginosuc_synth_CS"/>
</dbReference>
<dbReference type="InterPro" id="IPR023434">
    <property type="entry name" value="Arginosuc_synth_type_1_subfam"/>
</dbReference>
<dbReference type="InterPro" id="IPR024074">
    <property type="entry name" value="AS_cat/multimer_dom_body"/>
</dbReference>
<dbReference type="InterPro" id="IPR014729">
    <property type="entry name" value="Rossmann-like_a/b/a_fold"/>
</dbReference>
<dbReference type="NCBIfam" id="TIGR00032">
    <property type="entry name" value="argG"/>
    <property type="match status" value="1"/>
</dbReference>
<dbReference type="NCBIfam" id="NF001770">
    <property type="entry name" value="PRK00509.1"/>
    <property type="match status" value="1"/>
</dbReference>
<dbReference type="NCBIfam" id="NF010392">
    <property type="entry name" value="PRK13820.1"/>
    <property type="match status" value="1"/>
</dbReference>
<dbReference type="PANTHER" id="PTHR11587">
    <property type="entry name" value="ARGININOSUCCINATE SYNTHASE"/>
    <property type="match status" value="1"/>
</dbReference>
<dbReference type="PANTHER" id="PTHR11587:SF2">
    <property type="entry name" value="ARGININOSUCCINATE SYNTHASE"/>
    <property type="match status" value="1"/>
</dbReference>
<dbReference type="Pfam" id="PF20979">
    <property type="entry name" value="Arginosuc_syn_C"/>
    <property type="match status" value="1"/>
</dbReference>
<dbReference type="Pfam" id="PF00764">
    <property type="entry name" value="Arginosuc_synth"/>
    <property type="match status" value="1"/>
</dbReference>
<dbReference type="SUPFAM" id="SSF52402">
    <property type="entry name" value="Adenine nucleotide alpha hydrolases-like"/>
    <property type="match status" value="1"/>
</dbReference>
<dbReference type="SUPFAM" id="SSF69864">
    <property type="entry name" value="Argininosuccinate synthetase, C-terminal domain"/>
    <property type="match status" value="1"/>
</dbReference>
<dbReference type="PROSITE" id="PS00564">
    <property type="entry name" value="ARGININOSUCCIN_SYN_1"/>
    <property type="match status" value="1"/>
</dbReference>
<dbReference type="PROSITE" id="PS00565">
    <property type="entry name" value="ARGININOSUCCIN_SYN_2"/>
    <property type="match status" value="1"/>
</dbReference>
<organism>
    <name type="scientific">Haloarcula marismortui (strain ATCC 43049 / DSM 3752 / JCM 8966 / VKM B-1809)</name>
    <name type="common">Halobacterium marismortui</name>
    <dbReference type="NCBI Taxonomy" id="272569"/>
    <lineage>
        <taxon>Archaea</taxon>
        <taxon>Methanobacteriati</taxon>
        <taxon>Methanobacteriota</taxon>
        <taxon>Stenosarchaea group</taxon>
        <taxon>Halobacteria</taxon>
        <taxon>Halobacteriales</taxon>
        <taxon>Haloarculaceae</taxon>
        <taxon>Haloarcula</taxon>
    </lineage>
</organism>